<comment type="function">
    <text evidence="1">This is one of the proteins that binds to the 5S RNA in the ribosome where it forms part of the central protuberance.</text>
</comment>
<comment type="subunit">
    <text evidence="1">Part of the 50S ribosomal subunit; part of the 5S rRNA/L5/L18/L25 subcomplex. Contacts the 5S rRNA. Binds to the 5S rRNA independently of L5 and L18.</text>
</comment>
<comment type="similarity">
    <text evidence="1">Belongs to the bacterial ribosomal protein bL25 family.</text>
</comment>
<accession>B7MXK1</accession>
<feature type="chain" id="PRO_1000166192" description="Large ribosomal subunit protein bL25">
    <location>
        <begin position="1"/>
        <end position="94"/>
    </location>
</feature>
<name>RL25_ECO81</name>
<reference key="1">
    <citation type="journal article" date="2009" name="PLoS Genet.">
        <title>Organised genome dynamics in the Escherichia coli species results in highly diverse adaptive paths.</title>
        <authorList>
            <person name="Touchon M."/>
            <person name="Hoede C."/>
            <person name="Tenaillon O."/>
            <person name="Barbe V."/>
            <person name="Baeriswyl S."/>
            <person name="Bidet P."/>
            <person name="Bingen E."/>
            <person name="Bonacorsi S."/>
            <person name="Bouchier C."/>
            <person name="Bouvet O."/>
            <person name="Calteau A."/>
            <person name="Chiapello H."/>
            <person name="Clermont O."/>
            <person name="Cruveiller S."/>
            <person name="Danchin A."/>
            <person name="Diard M."/>
            <person name="Dossat C."/>
            <person name="Karoui M.E."/>
            <person name="Frapy E."/>
            <person name="Garry L."/>
            <person name="Ghigo J.M."/>
            <person name="Gilles A.M."/>
            <person name="Johnson J."/>
            <person name="Le Bouguenec C."/>
            <person name="Lescat M."/>
            <person name="Mangenot S."/>
            <person name="Martinez-Jehanne V."/>
            <person name="Matic I."/>
            <person name="Nassif X."/>
            <person name="Oztas S."/>
            <person name="Petit M.A."/>
            <person name="Pichon C."/>
            <person name="Rouy Z."/>
            <person name="Ruf C.S."/>
            <person name="Schneider D."/>
            <person name="Tourret J."/>
            <person name="Vacherie B."/>
            <person name="Vallenet D."/>
            <person name="Medigue C."/>
            <person name="Rocha E.P.C."/>
            <person name="Denamur E."/>
        </authorList>
    </citation>
    <scope>NUCLEOTIDE SEQUENCE [LARGE SCALE GENOMIC DNA]</scope>
    <source>
        <strain>ED1a</strain>
    </source>
</reference>
<proteinExistence type="inferred from homology"/>
<gene>
    <name evidence="1" type="primary">rplY</name>
    <name type="ordered locus">ECED1_2636</name>
</gene>
<keyword id="KW-0687">Ribonucleoprotein</keyword>
<keyword id="KW-0689">Ribosomal protein</keyword>
<keyword id="KW-0694">RNA-binding</keyword>
<keyword id="KW-0699">rRNA-binding</keyword>
<dbReference type="EMBL" id="CU928162">
    <property type="protein sequence ID" value="CAR08817.2"/>
    <property type="molecule type" value="Genomic_DNA"/>
</dbReference>
<dbReference type="RefSeq" id="WP_000494186.1">
    <property type="nucleotide sequence ID" value="NC_011745.1"/>
</dbReference>
<dbReference type="SMR" id="B7MXK1"/>
<dbReference type="KEGG" id="ecq:ECED1_2636"/>
<dbReference type="HOGENOM" id="CLU_137946_0_0_6"/>
<dbReference type="Proteomes" id="UP000000748">
    <property type="component" value="Chromosome"/>
</dbReference>
<dbReference type="GO" id="GO:0022625">
    <property type="term" value="C:cytosolic large ribosomal subunit"/>
    <property type="evidence" value="ECO:0007669"/>
    <property type="project" value="TreeGrafter"/>
</dbReference>
<dbReference type="GO" id="GO:0008097">
    <property type="term" value="F:5S rRNA binding"/>
    <property type="evidence" value="ECO:0007669"/>
    <property type="project" value="InterPro"/>
</dbReference>
<dbReference type="GO" id="GO:0003735">
    <property type="term" value="F:structural constituent of ribosome"/>
    <property type="evidence" value="ECO:0007669"/>
    <property type="project" value="InterPro"/>
</dbReference>
<dbReference type="GO" id="GO:0006412">
    <property type="term" value="P:translation"/>
    <property type="evidence" value="ECO:0007669"/>
    <property type="project" value="UniProtKB-UniRule"/>
</dbReference>
<dbReference type="CDD" id="cd00495">
    <property type="entry name" value="Ribosomal_L25_TL5_CTC"/>
    <property type="match status" value="1"/>
</dbReference>
<dbReference type="FunFam" id="2.40.240.10:FF:000002">
    <property type="entry name" value="50S ribosomal protein L25"/>
    <property type="match status" value="1"/>
</dbReference>
<dbReference type="Gene3D" id="2.40.240.10">
    <property type="entry name" value="Ribosomal Protein L25, Chain P"/>
    <property type="match status" value="1"/>
</dbReference>
<dbReference type="HAMAP" id="MF_01336">
    <property type="entry name" value="Ribosomal_bL25"/>
    <property type="match status" value="1"/>
</dbReference>
<dbReference type="InterPro" id="IPR020056">
    <property type="entry name" value="Rbsml_bL25/Gln-tRNA_synth_N"/>
</dbReference>
<dbReference type="InterPro" id="IPR011035">
    <property type="entry name" value="Ribosomal_bL25/Gln-tRNA_synth"/>
</dbReference>
<dbReference type="InterPro" id="IPR020055">
    <property type="entry name" value="Ribosomal_bL25_short"/>
</dbReference>
<dbReference type="InterPro" id="IPR029751">
    <property type="entry name" value="Ribosomal_L25_dom"/>
</dbReference>
<dbReference type="InterPro" id="IPR020930">
    <property type="entry name" value="Ribosomal_uL5_bac-type"/>
</dbReference>
<dbReference type="NCBIfam" id="NF004612">
    <property type="entry name" value="PRK05943.1"/>
    <property type="match status" value="1"/>
</dbReference>
<dbReference type="PANTHER" id="PTHR33284">
    <property type="entry name" value="RIBOSOMAL PROTEIN L25/GLN-TRNA SYNTHETASE, ANTI-CODON-BINDING DOMAIN-CONTAINING PROTEIN"/>
    <property type="match status" value="1"/>
</dbReference>
<dbReference type="PANTHER" id="PTHR33284:SF1">
    <property type="entry name" value="RIBOSOMAL PROTEIN L25_GLN-TRNA SYNTHETASE, ANTI-CODON-BINDING DOMAIN-CONTAINING PROTEIN"/>
    <property type="match status" value="1"/>
</dbReference>
<dbReference type="Pfam" id="PF01386">
    <property type="entry name" value="Ribosomal_L25p"/>
    <property type="match status" value="1"/>
</dbReference>
<dbReference type="SUPFAM" id="SSF50715">
    <property type="entry name" value="Ribosomal protein L25-like"/>
    <property type="match status" value="1"/>
</dbReference>
<sequence length="94" mass="10692">MFTINAEVRKEQGKGASRRLRAANKFPAIIYGGKEAPLAVELDHDKVMNMQVKAEFYSEVLTIVVDGKEIKVKAQDVQRHPYKPKLLHIDFVRA</sequence>
<evidence type="ECO:0000255" key="1">
    <source>
        <dbReference type="HAMAP-Rule" id="MF_01336"/>
    </source>
</evidence>
<evidence type="ECO:0000305" key="2"/>
<protein>
    <recommendedName>
        <fullName evidence="1">Large ribosomal subunit protein bL25</fullName>
    </recommendedName>
    <alternativeName>
        <fullName evidence="2">50S ribosomal protein L25</fullName>
    </alternativeName>
</protein>
<organism>
    <name type="scientific">Escherichia coli O81 (strain ED1a)</name>
    <dbReference type="NCBI Taxonomy" id="585397"/>
    <lineage>
        <taxon>Bacteria</taxon>
        <taxon>Pseudomonadati</taxon>
        <taxon>Pseudomonadota</taxon>
        <taxon>Gammaproteobacteria</taxon>
        <taxon>Enterobacterales</taxon>
        <taxon>Enterobacteriaceae</taxon>
        <taxon>Escherichia</taxon>
    </lineage>
</organism>